<keyword id="KW-0002">3D-structure</keyword>
<keyword id="KW-0479">Metal-binding</keyword>
<keyword id="KW-0597">Phosphoprotein</keyword>
<keyword id="KW-1185">Reference proteome</keyword>
<keyword id="KW-0862">Zinc</keyword>
<keyword id="KW-0863">Zinc-finger</keyword>
<protein>
    <recommendedName>
        <fullName>Uncharacterized protein C16C9.05</fullName>
    </recommendedName>
</protein>
<evidence type="ECO:0000255" key="1">
    <source>
        <dbReference type="PROSITE-ProRule" id="PRU00146"/>
    </source>
</evidence>
<evidence type="ECO:0000256" key="2">
    <source>
        <dbReference type="SAM" id="MobiDB-lite"/>
    </source>
</evidence>
<evidence type="ECO:0000269" key="3">
    <source>
    </source>
</evidence>
<evidence type="ECO:0007829" key="4">
    <source>
        <dbReference type="PDB" id="8I02"/>
    </source>
</evidence>
<comment type="interaction">
    <interactant intactId="EBI-15632828">
        <id>Q09819</id>
    </interactant>
    <interactant intactId="EBI-904651">
        <id>O59702</id>
        <label>clr6</label>
    </interactant>
    <organismsDiffer>false</organismsDiffer>
    <experiments>2</experiments>
</comment>
<reference key="1">
    <citation type="journal article" date="2002" name="Nature">
        <title>The genome sequence of Schizosaccharomyces pombe.</title>
        <authorList>
            <person name="Wood V."/>
            <person name="Gwilliam R."/>
            <person name="Rajandream M.A."/>
            <person name="Lyne M.H."/>
            <person name="Lyne R."/>
            <person name="Stewart A."/>
            <person name="Sgouros J.G."/>
            <person name="Peat N."/>
            <person name="Hayles J."/>
            <person name="Baker S.G."/>
            <person name="Basham D."/>
            <person name="Bowman S."/>
            <person name="Brooks K."/>
            <person name="Brown D."/>
            <person name="Brown S."/>
            <person name="Chillingworth T."/>
            <person name="Churcher C.M."/>
            <person name="Collins M."/>
            <person name="Connor R."/>
            <person name="Cronin A."/>
            <person name="Davis P."/>
            <person name="Feltwell T."/>
            <person name="Fraser A."/>
            <person name="Gentles S."/>
            <person name="Goble A."/>
            <person name="Hamlin N."/>
            <person name="Harris D.E."/>
            <person name="Hidalgo J."/>
            <person name="Hodgson G."/>
            <person name="Holroyd S."/>
            <person name="Hornsby T."/>
            <person name="Howarth S."/>
            <person name="Huckle E.J."/>
            <person name="Hunt S."/>
            <person name="Jagels K."/>
            <person name="James K.D."/>
            <person name="Jones L."/>
            <person name="Jones M."/>
            <person name="Leather S."/>
            <person name="McDonald S."/>
            <person name="McLean J."/>
            <person name="Mooney P."/>
            <person name="Moule S."/>
            <person name="Mungall K.L."/>
            <person name="Murphy L.D."/>
            <person name="Niblett D."/>
            <person name="Odell C."/>
            <person name="Oliver K."/>
            <person name="O'Neil S."/>
            <person name="Pearson D."/>
            <person name="Quail M.A."/>
            <person name="Rabbinowitsch E."/>
            <person name="Rutherford K.M."/>
            <person name="Rutter S."/>
            <person name="Saunders D."/>
            <person name="Seeger K."/>
            <person name="Sharp S."/>
            <person name="Skelton J."/>
            <person name="Simmonds M.N."/>
            <person name="Squares R."/>
            <person name="Squares S."/>
            <person name="Stevens K."/>
            <person name="Taylor K."/>
            <person name="Taylor R.G."/>
            <person name="Tivey A."/>
            <person name="Walsh S.V."/>
            <person name="Warren T."/>
            <person name="Whitehead S."/>
            <person name="Woodward J.R."/>
            <person name="Volckaert G."/>
            <person name="Aert R."/>
            <person name="Robben J."/>
            <person name="Grymonprez B."/>
            <person name="Weltjens I."/>
            <person name="Vanstreels E."/>
            <person name="Rieger M."/>
            <person name="Schaefer M."/>
            <person name="Mueller-Auer S."/>
            <person name="Gabel C."/>
            <person name="Fuchs M."/>
            <person name="Duesterhoeft A."/>
            <person name="Fritzc C."/>
            <person name="Holzer E."/>
            <person name="Moestl D."/>
            <person name="Hilbert H."/>
            <person name="Borzym K."/>
            <person name="Langer I."/>
            <person name="Beck A."/>
            <person name="Lehrach H."/>
            <person name="Reinhardt R."/>
            <person name="Pohl T.M."/>
            <person name="Eger P."/>
            <person name="Zimmermann W."/>
            <person name="Wedler H."/>
            <person name="Wambutt R."/>
            <person name="Purnelle B."/>
            <person name="Goffeau A."/>
            <person name="Cadieu E."/>
            <person name="Dreano S."/>
            <person name="Gloux S."/>
            <person name="Lelaure V."/>
            <person name="Mottier S."/>
            <person name="Galibert F."/>
            <person name="Aves S.J."/>
            <person name="Xiang Z."/>
            <person name="Hunt C."/>
            <person name="Moore K."/>
            <person name="Hurst S.M."/>
            <person name="Lucas M."/>
            <person name="Rochet M."/>
            <person name="Gaillardin C."/>
            <person name="Tallada V.A."/>
            <person name="Garzon A."/>
            <person name="Thode G."/>
            <person name="Daga R.R."/>
            <person name="Cruzado L."/>
            <person name="Jimenez J."/>
            <person name="Sanchez M."/>
            <person name="del Rey F."/>
            <person name="Benito J."/>
            <person name="Dominguez A."/>
            <person name="Revuelta J.L."/>
            <person name="Moreno S."/>
            <person name="Armstrong J."/>
            <person name="Forsburg S.L."/>
            <person name="Cerutti L."/>
            <person name="Lowe T."/>
            <person name="McCombie W.R."/>
            <person name="Paulsen I."/>
            <person name="Potashkin J."/>
            <person name="Shpakovski G.V."/>
            <person name="Ussery D."/>
            <person name="Barrell B.G."/>
            <person name="Nurse P."/>
        </authorList>
    </citation>
    <scope>NUCLEOTIDE SEQUENCE [LARGE SCALE GENOMIC DNA]</scope>
    <source>
        <strain>972 / ATCC 24843</strain>
    </source>
</reference>
<reference key="2">
    <citation type="journal article" date="2008" name="J. Proteome Res.">
        <title>Phosphoproteome analysis of fission yeast.</title>
        <authorList>
            <person name="Wilson-Grady J.T."/>
            <person name="Villen J."/>
            <person name="Gygi S.P."/>
        </authorList>
    </citation>
    <scope>PHOSPHORYLATION [LARGE SCALE ANALYSIS] AT THR-47</scope>
    <scope>IDENTIFICATION BY MASS SPECTROMETRY</scope>
</reference>
<sequence>MASSINNSSQPTVPSISNNSHGDSFVNEGPPSNFKNNSLTSSTHSSTDHVNVLPISQDKEMDISSPVKKQKASYSNKSPNKAPIQKSRGSSLKSHLETESQQTPVKRRRRKATIRNVDYCSACGGRGLFICCEGCPCSFHLSCLEPPLTPENIPEGSWFCVTCSIKSHHPPKHPLSIWSQLYDWIDSQNPSQYRLPDDLVHYFHGISRGDTGAYKETEGEMDTDEFSALPTGSSITNLAYCGYCSKPSMGACWVYGCQLCDTFYHKNCKEHAKKCSHDSIGKKGMRVPKNAVVIRTPLVLDTTSNTLNPKVMISGWQFLMGEFPSDELLYFPRLPVSCLYKVSEDGLIKDFLYAIGIEAKKFNNERKKRELEVIPPDVKSALLPARTHPNLPIALRTLFNKART</sequence>
<gene>
    <name type="ORF">SPAC16C9.05</name>
</gene>
<accession>Q09819</accession>
<proteinExistence type="evidence at protein level"/>
<feature type="chain" id="PRO_0000116415" description="Uncharacterized protein C16C9.05">
    <location>
        <begin position="1"/>
        <end position="404"/>
    </location>
</feature>
<feature type="zinc finger region" description="PHD-type" evidence="1">
    <location>
        <begin position="117"/>
        <end position="166"/>
    </location>
</feature>
<feature type="region of interest" description="Disordered" evidence="2">
    <location>
        <begin position="1"/>
        <end position="110"/>
    </location>
</feature>
<feature type="compositionally biased region" description="Polar residues" evidence="2">
    <location>
        <begin position="1"/>
        <end position="22"/>
    </location>
</feature>
<feature type="compositionally biased region" description="Polar residues" evidence="2">
    <location>
        <begin position="87"/>
        <end position="104"/>
    </location>
</feature>
<feature type="modified residue" description="Phosphothreonine" evidence="3">
    <location>
        <position position="47"/>
    </location>
</feature>
<feature type="strand" evidence="4">
    <location>
        <begin position="121"/>
        <end position="123"/>
    </location>
</feature>
<feature type="strand" evidence="4">
    <location>
        <begin position="133"/>
        <end position="135"/>
    </location>
</feature>
<feature type="strand" evidence="4">
    <location>
        <begin position="143"/>
        <end position="146"/>
    </location>
</feature>
<feature type="helix" evidence="4">
    <location>
        <begin position="150"/>
        <end position="152"/>
    </location>
</feature>
<feature type="helix" evidence="4">
    <location>
        <begin position="161"/>
        <end position="164"/>
    </location>
</feature>
<feature type="turn" evidence="4">
    <location>
        <begin position="165"/>
        <end position="167"/>
    </location>
</feature>
<feature type="helix" evidence="4">
    <location>
        <begin position="179"/>
        <end position="187"/>
    </location>
</feature>
<feature type="helix" evidence="4">
    <location>
        <begin position="197"/>
        <end position="200"/>
    </location>
</feature>
<feature type="strand" evidence="4">
    <location>
        <begin position="202"/>
        <end position="205"/>
    </location>
</feature>
<feature type="turn" evidence="4">
    <location>
        <begin position="242"/>
        <end position="244"/>
    </location>
</feature>
<feature type="strand" evidence="4">
    <location>
        <begin position="254"/>
        <end position="256"/>
    </location>
</feature>
<feature type="strand" evidence="4">
    <location>
        <begin position="261"/>
        <end position="263"/>
    </location>
</feature>
<feature type="helix" evidence="4">
    <location>
        <begin position="269"/>
        <end position="271"/>
    </location>
</feature>
<feature type="strand" evidence="4">
    <location>
        <begin position="284"/>
        <end position="286"/>
    </location>
</feature>
<feature type="strand" evidence="4">
    <location>
        <begin position="338"/>
        <end position="342"/>
    </location>
</feature>
<feature type="helix" evidence="4">
    <location>
        <begin position="344"/>
        <end position="370"/>
    </location>
</feature>
<feature type="helix" evidence="4">
    <location>
        <begin position="391"/>
        <end position="402"/>
    </location>
</feature>
<name>YAC5_SCHPO</name>
<organism>
    <name type="scientific">Schizosaccharomyces pombe (strain 972 / ATCC 24843)</name>
    <name type="common">Fission yeast</name>
    <dbReference type="NCBI Taxonomy" id="284812"/>
    <lineage>
        <taxon>Eukaryota</taxon>
        <taxon>Fungi</taxon>
        <taxon>Dikarya</taxon>
        <taxon>Ascomycota</taxon>
        <taxon>Taphrinomycotina</taxon>
        <taxon>Schizosaccharomycetes</taxon>
        <taxon>Schizosaccharomycetales</taxon>
        <taxon>Schizosaccharomycetaceae</taxon>
        <taxon>Schizosaccharomyces</taxon>
    </lineage>
</organism>
<dbReference type="EMBL" id="CU329670">
    <property type="protein sequence ID" value="CAA91193.1"/>
    <property type="molecule type" value="Genomic_DNA"/>
</dbReference>
<dbReference type="PIR" id="T37778">
    <property type="entry name" value="S62475"/>
</dbReference>
<dbReference type="PDB" id="8I02">
    <property type="method" value="EM"/>
    <property type="resolution" value="2.90 A"/>
    <property type="chains" value="F=1-404"/>
</dbReference>
<dbReference type="PDB" id="8IFG">
    <property type="method" value="EM"/>
    <property type="resolution" value="3.20 A"/>
    <property type="chains" value="F=1-404"/>
</dbReference>
<dbReference type="PDBsum" id="8I02"/>
<dbReference type="PDBsum" id="8IFG"/>
<dbReference type="EMDB" id="EMD-35092"/>
<dbReference type="EMDB" id="EMD-35416"/>
<dbReference type="SMR" id="Q09819"/>
<dbReference type="BioGRID" id="278784">
    <property type="interactions" value="409"/>
</dbReference>
<dbReference type="ComplexPortal" id="CPX-9124">
    <property type="entry name" value="RPD3S histone deacetylase complex"/>
</dbReference>
<dbReference type="FunCoup" id="Q09819">
    <property type="interactions" value="16"/>
</dbReference>
<dbReference type="IntAct" id="Q09819">
    <property type="interactions" value="4"/>
</dbReference>
<dbReference type="STRING" id="284812.Q09819"/>
<dbReference type="iPTMnet" id="Q09819"/>
<dbReference type="PaxDb" id="4896-SPAC16C9.05.1"/>
<dbReference type="EnsemblFungi" id="SPAC16C9.05.1">
    <property type="protein sequence ID" value="SPAC16C9.05.1:pep"/>
    <property type="gene ID" value="SPAC16C9.05"/>
</dbReference>
<dbReference type="KEGG" id="spo:2542318"/>
<dbReference type="PomBase" id="SPAC16C9.05"/>
<dbReference type="VEuPathDB" id="FungiDB:SPAC16C9.05"/>
<dbReference type="eggNOG" id="KOG4299">
    <property type="taxonomic scope" value="Eukaryota"/>
</dbReference>
<dbReference type="HOGENOM" id="CLU_756851_0_0_1"/>
<dbReference type="InParanoid" id="Q09819"/>
<dbReference type="OMA" id="FKHAKAC"/>
<dbReference type="PhylomeDB" id="Q09819"/>
<dbReference type="PRO" id="PR:Q09819"/>
<dbReference type="Proteomes" id="UP000002485">
    <property type="component" value="Chromosome I"/>
</dbReference>
<dbReference type="GO" id="GO:0005829">
    <property type="term" value="C:cytosol"/>
    <property type="evidence" value="ECO:0007005"/>
    <property type="project" value="PomBase"/>
</dbReference>
<dbReference type="GO" id="GO:0005634">
    <property type="term" value="C:nucleus"/>
    <property type="evidence" value="ECO:0007005"/>
    <property type="project" value="PomBase"/>
</dbReference>
<dbReference type="GO" id="GO:0032221">
    <property type="term" value="C:Rpd3S complex"/>
    <property type="evidence" value="ECO:0000314"/>
    <property type="project" value="PomBase"/>
</dbReference>
<dbReference type="GO" id="GO:0008270">
    <property type="term" value="F:zinc ion binding"/>
    <property type="evidence" value="ECO:0007669"/>
    <property type="project" value="UniProtKB-KW"/>
</dbReference>
<dbReference type="GO" id="GO:0006357">
    <property type="term" value="P:regulation of transcription by RNA polymerase II"/>
    <property type="evidence" value="ECO:0000318"/>
    <property type="project" value="GO_Central"/>
</dbReference>
<dbReference type="GO" id="GO:0045815">
    <property type="term" value="P:transcription initiation-coupled chromatin remodeling"/>
    <property type="evidence" value="ECO:0000305"/>
    <property type="project" value="PomBase"/>
</dbReference>
<dbReference type="CDD" id="cd15535">
    <property type="entry name" value="PHD1_Rco1"/>
    <property type="match status" value="1"/>
</dbReference>
<dbReference type="Gene3D" id="3.30.40.10">
    <property type="entry name" value="Zinc/RING finger domain, C3HC4 (zinc finger)"/>
    <property type="match status" value="1"/>
</dbReference>
<dbReference type="InterPro" id="IPR052819">
    <property type="entry name" value="Chromatin_regulatory_protein"/>
</dbReference>
<dbReference type="InterPro" id="IPR019786">
    <property type="entry name" value="Zinc_finger_PHD-type_CS"/>
</dbReference>
<dbReference type="InterPro" id="IPR011011">
    <property type="entry name" value="Znf_FYVE_PHD"/>
</dbReference>
<dbReference type="InterPro" id="IPR001965">
    <property type="entry name" value="Znf_PHD"/>
</dbReference>
<dbReference type="InterPro" id="IPR019787">
    <property type="entry name" value="Znf_PHD-finger"/>
</dbReference>
<dbReference type="InterPro" id="IPR013083">
    <property type="entry name" value="Znf_RING/FYVE/PHD"/>
</dbReference>
<dbReference type="PANTHER" id="PTHR47636:SF2">
    <property type="entry name" value="CLR6 HISTONE DEACETYLASE ASSOCIATED PHD PROTEIN-1 CPH1"/>
    <property type="match status" value="1"/>
</dbReference>
<dbReference type="PANTHER" id="PTHR47636">
    <property type="entry name" value="TRANSCRIPTIONAL REGULATORY PROTEIN RCO1"/>
    <property type="match status" value="1"/>
</dbReference>
<dbReference type="Pfam" id="PF00628">
    <property type="entry name" value="PHD"/>
    <property type="match status" value="1"/>
</dbReference>
<dbReference type="SMART" id="SM00249">
    <property type="entry name" value="PHD"/>
    <property type="match status" value="1"/>
</dbReference>
<dbReference type="SUPFAM" id="SSF57903">
    <property type="entry name" value="FYVE/PHD zinc finger"/>
    <property type="match status" value="1"/>
</dbReference>
<dbReference type="PROSITE" id="PS01359">
    <property type="entry name" value="ZF_PHD_1"/>
    <property type="match status" value="1"/>
</dbReference>
<dbReference type="PROSITE" id="PS50016">
    <property type="entry name" value="ZF_PHD_2"/>
    <property type="match status" value="1"/>
</dbReference>